<gene>
    <name type="primary">Cntf</name>
</gene>
<sequence>MAFAEQSPLTLHRRDLCSRSIWLARKIRSDLTALMESYVKHQGLNKNISLDSVDGVPVASTDRWSEMTEAERLQENLQAYRTFQGMLTKLLEDQRVHFTPTEGDFHQAIHTLTLQVSAFAYQLEELMALLEQKVPEKEADGMPVTIGDGGLFEKKLWGLKVLQELSQWTVRSIHDLRVISSHHMGISAHESHYGAKQM</sequence>
<protein>
    <recommendedName>
        <fullName>Ciliary neurotrophic factor</fullName>
        <shortName>CNTF</shortName>
    </recommendedName>
</protein>
<name>CNTF_MOUSE</name>
<evidence type="ECO:0000305" key="1"/>
<accession>P51642</accession>
<feature type="chain" id="PRO_0000149520" description="Ciliary neurotrophic factor">
    <location>
        <begin position="1"/>
        <end position="198"/>
    </location>
</feature>
<dbReference type="EMBL" id="U05342">
    <property type="protein sequence ID" value="AAA81912.1"/>
    <property type="molecule type" value="mRNA"/>
</dbReference>
<dbReference type="EMBL" id="BC027539">
    <property type="protein sequence ID" value="AAH27539.1"/>
    <property type="molecule type" value="mRNA"/>
</dbReference>
<dbReference type="CCDS" id="CCDS29637.1"/>
<dbReference type="PIR" id="I48723">
    <property type="entry name" value="I48723"/>
</dbReference>
<dbReference type="RefSeq" id="NP_740756.1">
    <property type="nucleotide sequence ID" value="NM_170786.2"/>
</dbReference>
<dbReference type="SMR" id="P51642"/>
<dbReference type="BioGRID" id="198795">
    <property type="interactions" value="4"/>
</dbReference>
<dbReference type="FunCoup" id="P51642">
    <property type="interactions" value="379"/>
</dbReference>
<dbReference type="STRING" id="10090.ENSMUSP00000108555"/>
<dbReference type="iPTMnet" id="P51642"/>
<dbReference type="PhosphoSitePlus" id="P51642"/>
<dbReference type="PaxDb" id="10090-ENSMUSP00000108555"/>
<dbReference type="ProteomicsDB" id="283584"/>
<dbReference type="Antibodypedia" id="34925">
    <property type="antibodies" value="644 antibodies from 39 providers"/>
</dbReference>
<dbReference type="DNASU" id="12803"/>
<dbReference type="Ensembl" id="ENSMUST00000112933.2">
    <property type="protein sequence ID" value="ENSMUSP00000108555.2"/>
    <property type="gene ID" value="ENSMUSG00000079415.3"/>
</dbReference>
<dbReference type="GeneID" id="12803"/>
<dbReference type="KEGG" id="mmu:12803"/>
<dbReference type="UCSC" id="uc008gun.1">
    <property type="organism name" value="mouse"/>
</dbReference>
<dbReference type="AGR" id="MGI:88439"/>
<dbReference type="CTD" id="1270"/>
<dbReference type="MGI" id="MGI:88439">
    <property type="gene designation" value="Cntf"/>
</dbReference>
<dbReference type="VEuPathDB" id="HostDB:ENSMUSG00000079415"/>
<dbReference type="eggNOG" id="ENOG502S4XX">
    <property type="taxonomic scope" value="Eukaryota"/>
</dbReference>
<dbReference type="GeneTree" id="ENSGT00420000029890"/>
<dbReference type="HOGENOM" id="CLU_118647_0_0_1"/>
<dbReference type="InParanoid" id="P51642"/>
<dbReference type="OMA" id="RWSEMTE"/>
<dbReference type="OrthoDB" id="9510890at2759"/>
<dbReference type="PhylomeDB" id="P51642"/>
<dbReference type="TreeFam" id="TF336237"/>
<dbReference type="Reactome" id="R-MMU-6788467">
    <property type="pathway name" value="IL-6-type cytokine receptor ligand interactions"/>
</dbReference>
<dbReference type="BioGRID-ORCS" id="12803">
    <property type="hits" value="2 hits in 77 CRISPR screens"/>
</dbReference>
<dbReference type="ChiTaRS" id="Gm44505">
    <property type="organism name" value="mouse"/>
</dbReference>
<dbReference type="PRO" id="PR:P51642"/>
<dbReference type="Proteomes" id="UP000000589">
    <property type="component" value="Chromosome 19"/>
</dbReference>
<dbReference type="RNAct" id="P51642">
    <property type="molecule type" value="protein"/>
</dbReference>
<dbReference type="Bgee" id="ENSMUSG00000079415">
    <property type="expression patterns" value="Expressed in lens of camera-type eye and 77 other cell types or tissues"/>
</dbReference>
<dbReference type="ExpressionAtlas" id="P51642">
    <property type="expression patterns" value="baseline and differential"/>
</dbReference>
<dbReference type="GO" id="GO:0005737">
    <property type="term" value="C:cytoplasm"/>
    <property type="evidence" value="ECO:0007669"/>
    <property type="project" value="UniProtKB-SubCell"/>
</dbReference>
<dbReference type="GO" id="GO:0005615">
    <property type="term" value="C:extracellular space"/>
    <property type="evidence" value="ECO:0000314"/>
    <property type="project" value="MGI"/>
</dbReference>
<dbReference type="GO" id="GO:0005127">
    <property type="term" value="F:ciliary neurotrophic factor receptor binding"/>
    <property type="evidence" value="ECO:0007669"/>
    <property type="project" value="InterPro"/>
</dbReference>
<dbReference type="GO" id="GO:0008083">
    <property type="term" value="F:growth factor activity"/>
    <property type="evidence" value="ECO:0007669"/>
    <property type="project" value="UniProtKB-KW"/>
</dbReference>
<dbReference type="GO" id="GO:0005138">
    <property type="term" value="F:interleukin-6 receptor binding"/>
    <property type="evidence" value="ECO:0007669"/>
    <property type="project" value="Ensembl"/>
</dbReference>
<dbReference type="GO" id="GO:0044877">
    <property type="term" value="F:protein-containing complex binding"/>
    <property type="evidence" value="ECO:0007669"/>
    <property type="project" value="Ensembl"/>
</dbReference>
<dbReference type="GO" id="GO:0097696">
    <property type="term" value="P:cell surface receptor signaling pathway via STAT"/>
    <property type="evidence" value="ECO:0007669"/>
    <property type="project" value="Ensembl"/>
</dbReference>
<dbReference type="GO" id="GO:0070120">
    <property type="term" value="P:ciliary neurotrophic factor-mediated signaling pathway"/>
    <property type="evidence" value="ECO:0007669"/>
    <property type="project" value="Ensembl"/>
</dbReference>
<dbReference type="GO" id="GO:0048644">
    <property type="term" value="P:muscle organ morphogenesis"/>
    <property type="evidence" value="ECO:0000316"/>
    <property type="project" value="MGI"/>
</dbReference>
<dbReference type="GO" id="GO:0043524">
    <property type="term" value="P:negative regulation of neuron apoptotic process"/>
    <property type="evidence" value="ECO:0007669"/>
    <property type="project" value="Ensembl"/>
</dbReference>
<dbReference type="GO" id="GO:0046533">
    <property type="term" value="P:negative regulation of photoreceptor cell differentiation"/>
    <property type="evidence" value="ECO:0000314"/>
    <property type="project" value="MGI"/>
</dbReference>
<dbReference type="GO" id="GO:0048666">
    <property type="term" value="P:neuron development"/>
    <property type="evidence" value="ECO:0000316"/>
    <property type="project" value="MGI"/>
</dbReference>
<dbReference type="GO" id="GO:0008284">
    <property type="term" value="P:positive regulation of cell population proliferation"/>
    <property type="evidence" value="ECO:0000316"/>
    <property type="project" value="MGI"/>
</dbReference>
<dbReference type="GO" id="GO:0010628">
    <property type="term" value="P:positive regulation of gene expression"/>
    <property type="evidence" value="ECO:0000266"/>
    <property type="project" value="MGI"/>
</dbReference>
<dbReference type="GO" id="GO:0046668">
    <property type="term" value="P:regulation of retinal cell programmed cell death"/>
    <property type="evidence" value="ECO:0000314"/>
    <property type="project" value="MGI"/>
</dbReference>
<dbReference type="GO" id="GO:0060221">
    <property type="term" value="P:retinal rod cell differentiation"/>
    <property type="evidence" value="ECO:0000314"/>
    <property type="project" value="MGI"/>
</dbReference>
<dbReference type="FunFam" id="1.20.1250.10:FF:000022">
    <property type="entry name" value="ciliary neurotrophic factor"/>
    <property type="match status" value="1"/>
</dbReference>
<dbReference type="Gene3D" id="1.20.1250.10">
    <property type="match status" value="1"/>
</dbReference>
<dbReference type="InterPro" id="IPR009079">
    <property type="entry name" value="4_helix_cytokine-like_core"/>
</dbReference>
<dbReference type="InterPro" id="IPR000151">
    <property type="entry name" value="Ciliary_neurotrophic_fac_CNTF"/>
</dbReference>
<dbReference type="PANTHER" id="PTHR15196">
    <property type="entry name" value="CILIARY NEUROTROPHIC FACTOR"/>
    <property type="match status" value="1"/>
</dbReference>
<dbReference type="PANTHER" id="PTHR15196:SF0">
    <property type="entry name" value="CILIARY NEUROTROPHIC FACTOR"/>
    <property type="match status" value="1"/>
</dbReference>
<dbReference type="Pfam" id="PF01110">
    <property type="entry name" value="CNTF"/>
    <property type="match status" value="1"/>
</dbReference>
<dbReference type="SUPFAM" id="SSF47266">
    <property type="entry name" value="4-helical cytokines"/>
    <property type="match status" value="1"/>
</dbReference>
<keyword id="KW-0963">Cytoplasm</keyword>
<keyword id="KW-0217">Developmental protein</keyword>
<keyword id="KW-0221">Differentiation</keyword>
<keyword id="KW-0339">Growth factor</keyword>
<keyword id="KW-0524">Neurogenesis</keyword>
<keyword id="KW-1185">Reference proteome</keyword>
<reference key="1">
    <citation type="journal article" date="1995" name="Gene">
        <title>A widely expressed novel C2H2 zinc-finger protein with multiple consensus phosphorylation sites is conserved in mouse and man.</title>
        <authorList>
            <person name="Saotome Y."/>
            <person name="Winter C.G."/>
            <person name="Hirsh D."/>
        </authorList>
    </citation>
    <scope>NUCLEOTIDE SEQUENCE [MRNA]</scope>
    <source>
        <tissue>Testis</tissue>
    </source>
</reference>
<reference key="2">
    <citation type="journal article" date="2004" name="Genome Res.">
        <title>The status, quality, and expansion of the NIH full-length cDNA project: the Mammalian Gene Collection (MGC).</title>
        <authorList>
            <consortium name="The MGC Project Team"/>
        </authorList>
    </citation>
    <scope>NUCLEOTIDE SEQUENCE [LARGE SCALE MRNA]</scope>
    <source>
        <strain>C57BL/6J</strain>
        <tissue>Thymus</tissue>
    </source>
</reference>
<comment type="function">
    <text>CNTF is a survival factor for various neuronal cell types. Seems to prevent the degeneration of motor axons after axotomy.</text>
</comment>
<comment type="subcellular location">
    <subcellularLocation>
        <location>Cytoplasm</location>
    </subcellularLocation>
</comment>
<comment type="tissue specificity">
    <text>Nervous system.</text>
</comment>
<comment type="similarity">
    <text evidence="1">Belongs to the CNTF family.</text>
</comment>
<proteinExistence type="evidence at transcript level"/>
<organism>
    <name type="scientific">Mus musculus</name>
    <name type="common">Mouse</name>
    <dbReference type="NCBI Taxonomy" id="10090"/>
    <lineage>
        <taxon>Eukaryota</taxon>
        <taxon>Metazoa</taxon>
        <taxon>Chordata</taxon>
        <taxon>Craniata</taxon>
        <taxon>Vertebrata</taxon>
        <taxon>Euteleostomi</taxon>
        <taxon>Mammalia</taxon>
        <taxon>Eutheria</taxon>
        <taxon>Euarchontoglires</taxon>
        <taxon>Glires</taxon>
        <taxon>Rodentia</taxon>
        <taxon>Myomorpha</taxon>
        <taxon>Muroidea</taxon>
        <taxon>Muridae</taxon>
        <taxon>Murinae</taxon>
        <taxon>Mus</taxon>
        <taxon>Mus</taxon>
    </lineage>
</organism>